<sequence length="465" mass="51089">MSSELMFNYTFSWPAGPKDVILTGTFDDWRGTLPLVKTAKGNFEITMPVKLANKDDTFQFKFIVDGVWCVSDSYKKEHVSEGIENNFLQITDLVETQEVAGASRIPEAGGLLCGKPPRSAGPPSTSNRKKNKRNNKKRRSKLKKKSTKNNKKSNESLDDNEEEDGVTGTTTEDVTGTSREETPLAEPTNVSKEAPGNFHILPIDQSADTTXSNGIIGGPGPVLVPNPGEIKEFTEIRDVDARELNERLNKKEEVPEPVAGPIVESSVTEKSPALPQADDPIVETKEVAHNVQELTPQVEAVTPLINEPEPLPTPEAQISIPESSKVEPVEGSLQSKLVEKRESTEGVLDGSKKVENKAKKDEEVFTLDPIVNKAPKLPLTDEQTAEGRKSPAVSEEKEKKKKQEKGSKEVKRSETSKEKKPSAKEVKKQTVKASKKQTASPLSSSTEEPKKKKTGFFGKLKKLFK</sequence>
<reference key="1">
    <citation type="journal article" date="2011" name="PLoS Genet.">
        <title>Whole-genome comparison reveals novel genetic elements that characterize the genome of industrial strains of Saccharomyces cerevisiae.</title>
        <authorList>
            <person name="Borneman A.R."/>
            <person name="Desany B.A."/>
            <person name="Riches D."/>
            <person name="Affourtit J.P."/>
            <person name="Forgan A.H."/>
            <person name="Pretorius I.S."/>
            <person name="Egholm M."/>
            <person name="Chambers P.J."/>
        </authorList>
    </citation>
    <scope>NUCLEOTIDE SEQUENCE [LARGE SCALE GENOMIC DNA]</scope>
    <source>
        <strain>VIN 13</strain>
    </source>
</reference>
<comment type="function">
    <text evidence="1">Cruciform DNA-binding protein which exerts an enhancing effect on the cleavage of cruciform DNA (X-DNA) by endonuclease VII from bacteriophage T4.</text>
</comment>
<comment type="PTM">
    <text evidence="1">Cleaved in the vicinity of position 160 to give an X-DNA-binding N-terminal subpeptide and a non-DNA-binding C-terminal subpeptide.</text>
</comment>
<comment type="similarity">
    <text evidence="4">Belongs to the CRP1/MDG1 family.</text>
</comment>
<comment type="sequence caution" evidence="4">
    <conflict type="erroneous initiation">
        <sequence resource="EMBL-CDS" id="EGA78598"/>
    </conflict>
    <text>Truncated N-terminus.</text>
</comment>
<keyword id="KW-0238">DNA-binding</keyword>
<keyword id="KW-0597">Phosphoprotein</keyword>
<protein>
    <recommendedName>
        <fullName>Cruciform DNA-recognizing protein 1</fullName>
    </recommendedName>
    <component>
        <recommendedName>
            <fullName>CRP1 short N-terminal subpeptide</fullName>
        </recommendedName>
    </component>
    <component>
        <recommendedName>
            <fullName>CRP1 short C-terminal subpeptide</fullName>
        </recommendedName>
    </component>
</protein>
<proteinExistence type="inferred from homology"/>
<gene>
    <name type="primary">CRP1</name>
    <name type="ORF">VIN13_2191</name>
</gene>
<organism>
    <name type="scientific">Saccharomyces cerevisiae (strain VIN 13)</name>
    <name type="common">Baker's yeast</name>
    <dbReference type="NCBI Taxonomy" id="764099"/>
    <lineage>
        <taxon>Eukaryota</taxon>
        <taxon>Fungi</taxon>
        <taxon>Dikarya</taxon>
        <taxon>Ascomycota</taxon>
        <taxon>Saccharomycotina</taxon>
        <taxon>Saccharomycetes</taxon>
        <taxon>Saccharomycetales</taxon>
        <taxon>Saccharomycetaceae</taxon>
        <taxon>Saccharomyces</taxon>
    </lineage>
</organism>
<dbReference type="EMBL" id="ADXC01000042">
    <property type="protein sequence ID" value="EGA78598.1"/>
    <property type="status" value="ALT_INIT"/>
    <property type="molecule type" value="Genomic_DNA"/>
</dbReference>
<dbReference type="HOGENOM" id="CLU_594765_0_0_1"/>
<dbReference type="OrthoDB" id="40992at4893"/>
<dbReference type="GO" id="GO:0005737">
    <property type="term" value="C:cytoplasm"/>
    <property type="evidence" value="ECO:0007669"/>
    <property type="project" value="TreeGrafter"/>
</dbReference>
<dbReference type="GO" id="GO:0031588">
    <property type="term" value="C:nucleotide-activated protein kinase complex"/>
    <property type="evidence" value="ECO:0007669"/>
    <property type="project" value="TreeGrafter"/>
</dbReference>
<dbReference type="GO" id="GO:0005634">
    <property type="term" value="C:nucleus"/>
    <property type="evidence" value="ECO:0007669"/>
    <property type="project" value="TreeGrafter"/>
</dbReference>
<dbReference type="GO" id="GO:0003677">
    <property type="term" value="F:DNA binding"/>
    <property type="evidence" value="ECO:0007669"/>
    <property type="project" value="UniProtKB-KW"/>
</dbReference>
<dbReference type="GO" id="GO:0019901">
    <property type="term" value="F:protein kinase binding"/>
    <property type="evidence" value="ECO:0007669"/>
    <property type="project" value="TreeGrafter"/>
</dbReference>
<dbReference type="GO" id="GO:0007165">
    <property type="term" value="P:signal transduction"/>
    <property type="evidence" value="ECO:0007669"/>
    <property type="project" value="TreeGrafter"/>
</dbReference>
<dbReference type="CDD" id="cd02859">
    <property type="entry name" value="E_set_AMPKbeta_like_N"/>
    <property type="match status" value="1"/>
</dbReference>
<dbReference type="FunFam" id="2.60.40.10:FF:001765">
    <property type="entry name" value="Cruciform DNA-recognizing protein 1"/>
    <property type="match status" value="1"/>
</dbReference>
<dbReference type="Gene3D" id="2.60.40.10">
    <property type="entry name" value="Immunoglobulins"/>
    <property type="match status" value="1"/>
</dbReference>
<dbReference type="InterPro" id="IPR032640">
    <property type="entry name" value="AMPK1_CBM"/>
</dbReference>
<dbReference type="InterPro" id="IPR050827">
    <property type="entry name" value="CRP1_MDG1_kinase"/>
</dbReference>
<dbReference type="InterPro" id="IPR013783">
    <property type="entry name" value="Ig-like_fold"/>
</dbReference>
<dbReference type="InterPro" id="IPR014756">
    <property type="entry name" value="Ig_E-set"/>
</dbReference>
<dbReference type="PANTHER" id="PTHR10343">
    <property type="entry name" value="5'-AMP-ACTIVATED PROTEIN KINASE , BETA SUBUNIT"/>
    <property type="match status" value="1"/>
</dbReference>
<dbReference type="PANTHER" id="PTHR10343:SF81">
    <property type="entry name" value="CRUCIFORM DNA-RECOGNIZING PROTEIN 1-RELATED"/>
    <property type="match status" value="1"/>
</dbReference>
<dbReference type="Pfam" id="PF16561">
    <property type="entry name" value="AMPK1_CBM"/>
    <property type="match status" value="1"/>
</dbReference>
<dbReference type="SUPFAM" id="SSF81296">
    <property type="entry name" value="E set domains"/>
    <property type="match status" value="1"/>
</dbReference>
<feature type="chain" id="PRO_0000409620" description="Cruciform DNA-recognizing protein 1">
    <location>
        <begin position="1"/>
        <end position="465"/>
    </location>
</feature>
<feature type="chain" id="PRO_0000409621" description="CRP1 short N-terminal subpeptide" evidence="1">
    <location>
        <begin position="1"/>
        <end position="160"/>
    </location>
</feature>
<feature type="chain" id="PRO_0000409622" description="CRP1 short C-terminal subpeptide" evidence="1">
    <location>
        <begin position="161"/>
        <end position="465"/>
    </location>
</feature>
<feature type="region of interest" description="Disordered" evidence="3">
    <location>
        <begin position="107"/>
        <end position="227"/>
    </location>
</feature>
<feature type="region of interest" description="X-DNA-binding" evidence="1">
    <location>
        <begin position="160"/>
        <end position="161"/>
    </location>
</feature>
<feature type="region of interest" description="Disordered" evidence="3">
    <location>
        <begin position="247"/>
        <end position="276"/>
    </location>
</feature>
<feature type="region of interest" description="Disordered" evidence="3">
    <location>
        <begin position="298"/>
        <end position="465"/>
    </location>
</feature>
<feature type="compositionally biased region" description="Basic residues" evidence="3">
    <location>
        <begin position="127"/>
        <end position="151"/>
    </location>
</feature>
<feature type="compositionally biased region" description="Acidic residues" evidence="3">
    <location>
        <begin position="156"/>
        <end position="165"/>
    </location>
</feature>
<feature type="compositionally biased region" description="Low complexity" evidence="3">
    <location>
        <begin position="166"/>
        <end position="177"/>
    </location>
</feature>
<feature type="compositionally biased region" description="Basic and acidic residues" evidence="3">
    <location>
        <begin position="337"/>
        <end position="363"/>
    </location>
</feature>
<feature type="compositionally biased region" description="Basic and acidic residues" evidence="3">
    <location>
        <begin position="385"/>
        <end position="398"/>
    </location>
</feature>
<feature type="compositionally biased region" description="Basic and acidic residues" evidence="3">
    <location>
        <begin position="404"/>
        <end position="428"/>
    </location>
</feature>
<feature type="compositionally biased region" description="Basic residues" evidence="3">
    <location>
        <begin position="451"/>
        <end position="465"/>
    </location>
</feature>
<feature type="modified residue" description="Phosphoserine" evidence="2">
    <location>
        <position position="153"/>
    </location>
</feature>
<feature type="modified residue" description="Phosphoserine" evidence="2">
    <location>
        <position position="156"/>
    </location>
</feature>
<feature type="modified residue" description="Phosphothreonine" evidence="2">
    <location>
        <position position="182"/>
    </location>
</feature>
<feature type="modified residue" description="Phosphoserine" evidence="2">
    <location>
        <position position="271"/>
    </location>
</feature>
<feature type="modified residue" description="Phosphothreonine" evidence="2">
    <location>
        <position position="295"/>
    </location>
</feature>
<feature type="modified residue" description="Phosphoserine" evidence="2">
    <location>
        <position position="319"/>
    </location>
</feature>
<feature type="modified residue" description="Phosphoserine" evidence="2">
    <location>
        <position position="343"/>
    </location>
</feature>
<feature type="modified residue" description="Phosphothreonine" evidence="2">
    <location>
        <position position="366"/>
    </location>
</feature>
<feature type="modified residue" description="Phosphoserine" evidence="2">
    <location>
        <position position="394"/>
    </location>
</feature>
<feature type="modified residue" description="Phosphoserine" evidence="2">
    <location>
        <position position="440"/>
    </location>
</feature>
<name>CRP1_YEASV</name>
<evidence type="ECO:0000250" key="1"/>
<evidence type="ECO:0000250" key="2">
    <source>
        <dbReference type="UniProtKB" id="P38845"/>
    </source>
</evidence>
<evidence type="ECO:0000256" key="3">
    <source>
        <dbReference type="SAM" id="MobiDB-lite"/>
    </source>
</evidence>
<evidence type="ECO:0000305" key="4"/>
<accession>E7LVH4</accession>